<protein>
    <recommendedName>
        <fullName evidence="1">Small ribosomal subunit protein uS8</fullName>
    </recommendedName>
    <alternativeName>
        <fullName evidence="2">30S ribosomal protein S8</fullName>
    </alternativeName>
</protein>
<reference key="1">
    <citation type="journal article" date="2009" name="PLoS Pathog.">
        <title>Molecular evolutionary consequences of niche restriction in Francisella tularensis, a facultative intracellular pathogen.</title>
        <authorList>
            <person name="Larsson P."/>
            <person name="Elfsmark D."/>
            <person name="Svensson K."/>
            <person name="Wikstroem P."/>
            <person name="Forsman M."/>
            <person name="Brettin T."/>
            <person name="Keim P."/>
            <person name="Johansson A."/>
        </authorList>
    </citation>
    <scope>NUCLEOTIDE SEQUENCE [LARGE SCALE GENOMIC DNA]</scope>
    <source>
        <strain>FSC147</strain>
    </source>
</reference>
<comment type="function">
    <text evidence="1">One of the primary rRNA binding proteins, it binds directly to 16S rRNA central domain where it helps coordinate assembly of the platform of the 30S subunit.</text>
</comment>
<comment type="subunit">
    <text evidence="1">Part of the 30S ribosomal subunit. Contacts proteins S5 and S12.</text>
</comment>
<comment type="similarity">
    <text evidence="1">Belongs to the universal ribosomal protein uS8 family.</text>
</comment>
<dbReference type="EMBL" id="CP000915">
    <property type="protein sequence ID" value="ACD31335.1"/>
    <property type="molecule type" value="Genomic_DNA"/>
</dbReference>
<dbReference type="SMR" id="B2SDX1"/>
<dbReference type="KEGG" id="ftm:FTM_1513"/>
<dbReference type="HOGENOM" id="CLU_098428_0_0_6"/>
<dbReference type="GO" id="GO:1990904">
    <property type="term" value="C:ribonucleoprotein complex"/>
    <property type="evidence" value="ECO:0007669"/>
    <property type="project" value="UniProtKB-KW"/>
</dbReference>
<dbReference type="GO" id="GO:0005840">
    <property type="term" value="C:ribosome"/>
    <property type="evidence" value="ECO:0007669"/>
    <property type="project" value="UniProtKB-KW"/>
</dbReference>
<dbReference type="GO" id="GO:0019843">
    <property type="term" value="F:rRNA binding"/>
    <property type="evidence" value="ECO:0007669"/>
    <property type="project" value="UniProtKB-UniRule"/>
</dbReference>
<dbReference type="GO" id="GO:0003735">
    <property type="term" value="F:structural constituent of ribosome"/>
    <property type="evidence" value="ECO:0007669"/>
    <property type="project" value="InterPro"/>
</dbReference>
<dbReference type="GO" id="GO:0006412">
    <property type="term" value="P:translation"/>
    <property type="evidence" value="ECO:0007669"/>
    <property type="project" value="UniProtKB-UniRule"/>
</dbReference>
<dbReference type="FunFam" id="3.30.1490.10:FF:000001">
    <property type="entry name" value="30S ribosomal protein S8"/>
    <property type="match status" value="1"/>
</dbReference>
<dbReference type="Gene3D" id="3.30.1370.30">
    <property type="match status" value="1"/>
</dbReference>
<dbReference type="Gene3D" id="3.30.1490.10">
    <property type="match status" value="1"/>
</dbReference>
<dbReference type="HAMAP" id="MF_01302_B">
    <property type="entry name" value="Ribosomal_uS8_B"/>
    <property type="match status" value="1"/>
</dbReference>
<dbReference type="InterPro" id="IPR000630">
    <property type="entry name" value="Ribosomal_uS8"/>
</dbReference>
<dbReference type="InterPro" id="IPR047863">
    <property type="entry name" value="Ribosomal_uS8_CS"/>
</dbReference>
<dbReference type="InterPro" id="IPR035987">
    <property type="entry name" value="Ribosomal_uS8_sf"/>
</dbReference>
<dbReference type="NCBIfam" id="NF001109">
    <property type="entry name" value="PRK00136.1"/>
    <property type="match status" value="1"/>
</dbReference>
<dbReference type="PANTHER" id="PTHR11758">
    <property type="entry name" value="40S RIBOSOMAL PROTEIN S15A"/>
    <property type="match status" value="1"/>
</dbReference>
<dbReference type="Pfam" id="PF00410">
    <property type="entry name" value="Ribosomal_S8"/>
    <property type="match status" value="1"/>
</dbReference>
<dbReference type="SUPFAM" id="SSF56047">
    <property type="entry name" value="Ribosomal protein S8"/>
    <property type="match status" value="1"/>
</dbReference>
<dbReference type="PROSITE" id="PS00053">
    <property type="entry name" value="RIBOSOMAL_S8"/>
    <property type="match status" value="1"/>
</dbReference>
<organism>
    <name type="scientific">Francisella tularensis subsp. mediasiatica (strain FSC147)</name>
    <dbReference type="NCBI Taxonomy" id="441952"/>
    <lineage>
        <taxon>Bacteria</taxon>
        <taxon>Pseudomonadati</taxon>
        <taxon>Pseudomonadota</taxon>
        <taxon>Gammaproteobacteria</taxon>
        <taxon>Thiotrichales</taxon>
        <taxon>Francisellaceae</taxon>
        <taxon>Francisella</taxon>
    </lineage>
</organism>
<gene>
    <name evidence="1" type="primary">rpsH</name>
    <name type="ordered locus">FTM_1513</name>
</gene>
<feature type="chain" id="PRO_1000140560" description="Small ribosomal subunit protein uS8">
    <location>
        <begin position="1"/>
        <end position="132"/>
    </location>
</feature>
<evidence type="ECO:0000255" key="1">
    <source>
        <dbReference type="HAMAP-Rule" id="MF_01302"/>
    </source>
</evidence>
<evidence type="ECO:0000305" key="2"/>
<sequence length="132" mass="14397">MSMQDPIADMFTRIRNGLSAEKEFVSVPFSKIKMEIANFLVNEGYIKSCSKGTTSMGHPSIEVELKYHAGAPVIEMIKRVSRPSLRIYKSHADLPKVYGGYGVAIVSTSKGLVSDRKARDLGVGGEIIGYVA</sequence>
<accession>B2SDX1</accession>
<name>RS8_FRATM</name>
<keyword id="KW-0687">Ribonucleoprotein</keyword>
<keyword id="KW-0689">Ribosomal protein</keyword>
<keyword id="KW-0694">RNA-binding</keyword>
<keyword id="KW-0699">rRNA-binding</keyword>
<proteinExistence type="inferred from homology"/>